<dbReference type="EC" id="1.10.3.9" evidence="1"/>
<dbReference type="EMBL" id="DQ347959">
    <property type="protein sequence ID" value="ABC56280.1"/>
    <property type="molecule type" value="Genomic_DNA"/>
</dbReference>
<dbReference type="EMBL" id="AM087200">
    <property type="protein sequence ID" value="CAJ32266.1"/>
    <property type="molecule type" value="Genomic_DNA"/>
</dbReference>
<dbReference type="RefSeq" id="AP_004908.1">
    <property type="nucleotide sequence ID" value="AC_000188.1"/>
</dbReference>
<dbReference type="RefSeq" id="YP_008563068.1">
    <property type="nucleotide sequence ID" value="NC_007898.3"/>
</dbReference>
<dbReference type="SMR" id="Q2MIC0"/>
<dbReference type="FunCoup" id="Q2MIC0">
    <property type="interactions" value="278"/>
</dbReference>
<dbReference type="STRING" id="4081.Q2MIC0"/>
<dbReference type="PaxDb" id="4081-Solyc05g016120.1.1"/>
<dbReference type="GeneID" id="3950408"/>
<dbReference type="KEGG" id="sly:3950408"/>
<dbReference type="eggNOG" id="ENOG502QR09">
    <property type="taxonomic scope" value="Eukaryota"/>
</dbReference>
<dbReference type="InParanoid" id="Q2MIC0"/>
<dbReference type="OrthoDB" id="143at2759"/>
<dbReference type="Proteomes" id="UP000004994">
    <property type="component" value="Chloroplast"/>
</dbReference>
<dbReference type="ExpressionAtlas" id="Q2MIC0">
    <property type="expression patterns" value="baseline and differential"/>
</dbReference>
<dbReference type="GO" id="GO:0009535">
    <property type="term" value="C:chloroplast thylakoid membrane"/>
    <property type="evidence" value="ECO:0007669"/>
    <property type="project" value="UniProtKB-SubCell"/>
</dbReference>
<dbReference type="GO" id="GO:0009523">
    <property type="term" value="C:photosystem II"/>
    <property type="evidence" value="ECO:0000318"/>
    <property type="project" value="GO_Central"/>
</dbReference>
<dbReference type="GO" id="GO:0016168">
    <property type="term" value="F:chlorophyll binding"/>
    <property type="evidence" value="ECO:0007669"/>
    <property type="project" value="UniProtKB-UniRule"/>
</dbReference>
<dbReference type="GO" id="GO:0045156">
    <property type="term" value="F:electron transporter, transferring electrons within the cyclic electron transport pathway of photosynthesis activity"/>
    <property type="evidence" value="ECO:0007669"/>
    <property type="project" value="InterPro"/>
</dbReference>
<dbReference type="GO" id="GO:0005506">
    <property type="term" value="F:iron ion binding"/>
    <property type="evidence" value="ECO:0007669"/>
    <property type="project" value="UniProtKB-UniRule"/>
</dbReference>
<dbReference type="GO" id="GO:0016682">
    <property type="term" value="F:oxidoreductase activity, acting on diphenols and related substances as donors, oxygen as acceptor"/>
    <property type="evidence" value="ECO:0007669"/>
    <property type="project" value="UniProtKB-UniRule"/>
</dbReference>
<dbReference type="GO" id="GO:0010242">
    <property type="term" value="F:oxygen evolving activity"/>
    <property type="evidence" value="ECO:0007669"/>
    <property type="project" value="UniProtKB-EC"/>
</dbReference>
<dbReference type="GO" id="GO:0009772">
    <property type="term" value="P:photosynthetic electron transport in photosystem II"/>
    <property type="evidence" value="ECO:0007669"/>
    <property type="project" value="InterPro"/>
</dbReference>
<dbReference type="GO" id="GO:0009635">
    <property type="term" value="P:response to herbicide"/>
    <property type="evidence" value="ECO:0007669"/>
    <property type="project" value="UniProtKB-KW"/>
</dbReference>
<dbReference type="CDD" id="cd09289">
    <property type="entry name" value="Photosystem-II_D1"/>
    <property type="match status" value="1"/>
</dbReference>
<dbReference type="FunFam" id="1.20.85.10:FF:000002">
    <property type="entry name" value="Photosystem II protein D1"/>
    <property type="match status" value="1"/>
</dbReference>
<dbReference type="Gene3D" id="1.20.85.10">
    <property type="entry name" value="Photosystem II protein D1-like"/>
    <property type="match status" value="1"/>
</dbReference>
<dbReference type="HAMAP" id="MF_01379">
    <property type="entry name" value="PSII_PsbA_D1"/>
    <property type="match status" value="1"/>
</dbReference>
<dbReference type="InterPro" id="IPR055266">
    <property type="entry name" value="D1/D2"/>
</dbReference>
<dbReference type="InterPro" id="IPR036854">
    <property type="entry name" value="Photo_II_D1/D2_sf"/>
</dbReference>
<dbReference type="InterPro" id="IPR000484">
    <property type="entry name" value="Photo_RC_L/M"/>
</dbReference>
<dbReference type="InterPro" id="IPR055265">
    <property type="entry name" value="Photo_RC_L/M_CS"/>
</dbReference>
<dbReference type="InterPro" id="IPR005867">
    <property type="entry name" value="PSII_D1"/>
</dbReference>
<dbReference type="NCBIfam" id="TIGR01151">
    <property type="entry name" value="psbA"/>
    <property type="match status" value="1"/>
</dbReference>
<dbReference type="PANTHER" id="PTHR33149:SF12">
    <property type="entry name" value="PHOTOSYSTEM II D2 PROTEIN"/>
    <property type="match status" value="1"/>
</dbReference>
<dbReference type="PANTHER" id="PTHR33149">
    <property type="entry name" value="PHOTOSYSTEM II PROTEIN D1"/>
    <property type="match status" value="1"/>
</dbReference>
<dbReference type="Pfam" id="PF00124">
    <property type="entry name" value="Photo_RC"/>
    <property type="match status" value="1"/>
</dbReference>
<dbReference type="PRINTS" id="PR00256">
    <property type="entry name" value="REACTNCENTRE"/>
</dbReference>
<dbReference type="SUPFAM" id="SSF81483">
    <property type="entry name" value="Bacterial photosystem II reaction centre, L and M subunits"/>
    <property type="match status" value="1"/>
</dbReference>
<dbReference type="PROSITE" id="PS00244">
    <property type="entry name" value="REACTION_CENTER"/>
    <property type="match status" value="1"/>
</dbReference>
<proteinExistence type="inferred from homology"/>
<reference key="1">
    <citation type="journal article" date="2006" name="Theor. Appl. Genet.">
        <title>Complete chloroplast genome sequences of Solanum bulbocastanum, Solanum lycopersicum and comparative analyses with other Solanaceae genomes.</title>
        <authorList>
            <person name="Daniell H."/>
            <person name="Lee S.-B."/>
            <person name="Grevich J."/>
            <person name="Saski C."/>
            <person name="Quesada-Vargas T."/>
            <person name="Guda C."/>
            <person name="Tomkins J."/>
            <person name="Jansen R.K."/>
        </authorList>
    </citation>
    <scope>NUCLEOTIDE SEQUENCE [LARGE SCALE GENOMIC DNA]</scope>
    <source>
        <strain>cv. LA3023</strain>
    </source>
</reference>
<reference key="2">
    <citation type="journal article" date="2006" name="J. Mol. Evol.">
        <title>Sequence of the tomato chloroplast DNA and evolutionary comparison of solanaceous plastid genomes.</title>
        <authorList>
            <person name="Kahlau S."/>
            <person name="Aspinall S."/>
            <person name="Gray J.C."/>
            <person name="Bock R."/>
        </authorList>
    </citation>
    <scope>NUCLEOTIDE SEQUENCE [LARGE SCALE GENOMIC DNA]</scope>
    <source>
        <strain>cv. IPA-6</strain>
    </source>
</reference>
<organism>
    <name type="scientific">Solanum lycopersicum</name>
    <name type="common">Tomato</name>
    <name type="synonym">Lycopersicon esculentum</name>
    <dbReference type="NCBI Taxonomy" id="4081"/>
    <lineage>
        <taxon>Eukaryota</taxon>
        <taxon>Viridiplantae</taxon>
        <taxon>Streptophyta</taxon>
        <taxon>Embryophyta</taxon>
        <taxon>Tracheophyta</taxon>
        <taxon>Spermatophyta</taxon>
        <taxon>Magnoliopsida</taxon>
        <taxon>eudicotyledons</taxon>
        <taxon>Gunneridae</taxon>
        <taxon>Pentapetalae</taxon>
        <taxon>asterids</taxon>
        <taxon>lamiids</taxon>
        <taxon>Solanales</taxon>
        <taxon>Solanaceae</taxon>
        <taxon>Solanoideae</taxon>
        <taxon>Solaneae</taxon>
        <taxon>Solanum</taxon>
        <taxon>Solanum subgen. Lycopersicon</taxon>
    </lineage>
</organism>
<geneLocation type="chloroplast"/>
<keyword id="KW-0007">Acetylation</keyword>
<keyword id="KW-0106">Calcium</keyword>
<keyword id="KW-0148">Chlorophyll</keyword>
<keyword id="KW-0150">Chloroplast</keyword>
<keyword id="KW-0157">Chromophore</keyword>
<keyword id="KW-0249">Electron transport</keyword>
<keyword id="KW-0359">Herbicide resistance</keyword>
<keyword id="KW-0408">Iron</keyword>
<keyword id="KW-0460">Magnesium</keyword>
<keyword id="KW-0464">Manganese</keyword>
<keyword id="KW-0472">Membrane</keyword>
<keyword id="KW-0479">Metal-binding</keyword>
<keyword id="KW-0560">Oxidoreductase</keyword>
<keyword id="KW-0597">Phosphoprotein</keyword>
<keyword id="KW-0602">Photosynthesis</keyword>
<keyword id="KW-0604">Photosystem II</keyword>
<keyword id="KW-0934">Plastid</keyword>
<keyword id="KW-1185">Reference proteome</keyword>
<keyword id="KW-0793">Thylakoid</keyword>
<keyword id="KW-0812">Transmembrane</keyword>
<keyword id="KW-1133">Transmembrane helix</keyword>
<keyword id="KW-0813">Transport</keyword>
<gene>
    <name evidence="1" type="primary">psbA</name>
</gene>
<evidence type="ECO:0000255" key="1">
    <source>
        <dbReference type="HAMAP-Rule" id="MF_01379"/>
    </source>
</evidence>
<accession>Q2MIC0</accession>
<protein>
    <recommendedName>
        <fullName evidence="1">Photosystem II protein D1</fullName>
        <shortName evidence="1">PSII D1 protein</shortName>
        <ecNumber evidence="1">1.10.3.9</ecNumber>
    </recommendedName>
    <alternativeName>
        <fullName evidence="1">Photosystem II Q(B) protein</fullName>
    </alternativeName>
</protein>
<sequence>MTAILERRESESLWGRFCNWITSTENRLYIGWFGVLMIPTLLTATSVFIIAFIAAPPVDIDGIREPVSGSLLYGNNIISGAIIPTSAAIGLHFYPIWEAASVDEWLYNGGPYELIVLHFLLGVACYMGREWELSFRLGMRPWIAVAYSAPVAAATAVFLIYPIGQGSFSDGMPLGISGTFNFMIVFQAEHNILMHPFHMLGVAGVFGGSLFSAMHGSLVTSSLIRETTENESANEGYRFGQEEETYNIVAAHGYFGRLIFQYASFNNSRSLHFFLAAWPVVGIWFTALGISTMAFNLNGFNFNQSVVDSQGRVINTWADIINRANLGMEVMHERNAHNFPLDLAAIEAPSTNG</sequence>
<name>PSBA_SOLLC</name>
<feature type="initiator methionine" description="Removed" evidence="1">
    <location>
        <position position="1"/>
    </location>
</feature>
<feature type="chain" id="PRO_0000277326" description="Photosystem II protein D1" evidence="1">
    <location>
        <begin position="2"/>
        <end position="344"/>
    </location>
</feature>
<feature type="propeptide" id="PRO_0000316483" evidence="1">
    <location>
        <begin position="345"/>
        <end position="353"/>
    </location>
</feature>
<feature type="transmembrane region" description="Helical" evidence="1">
    <location>
        <begin position="29"/>
        <end position="46"/>
    </location>
</feature>
<feature type="transmembrane region" description="Helical" evidence="1">
    <location>
        <begin position="118"/>
        <end position="133"/>
    </location>
</feature>
<feature type="transmembrane region" description="Helical" evidence="1">
    <location>
        <begin position="142"/>
        <end position="156"/>
    </location>
</feature>
<feature type="transmembrane region" description="Helical" evidence="1">
    <location>
        <begin position="197"/>
        <end position="218"/>
    </location>
</feature>
<feature type="transmembrane region" description="Helical" evidence="1">
    <location>
        <begin position="274"/>
        <end position="288"/>
    </location>
</feature>
<feature type="binding site" description="axial binding residue" evidence="1">
    <location>
        <position position="118"/>
    </location>
    <ligand>
        <name>chlorophyll a</name>
        <dbReference type="ChEBI" id="CHEBI:58416"/>
        <label>ChlzD1</label>
    </ligand>
    <ligandPart>
        <name>Mg</name>
        <dbReference type="ChEBI" id="CHEBI:25107"/>
    </ligandPart>
</feature>
<feature type="binding site" evidence="1">
    <location>
        <position position="126"/>
    </location>
    <ligand>
        <name>pheophytin a</name>
        <dbReference type="ChEBI" id="CHEBI:136840"/>
        <label>D1</label>
    </ligand>
</feature>
<feature type="binding site" evidence="1">
    <location>
        <position position="170"/>
    </location>
    <ligand>
        <name>[CaMn4O5] cluster</name>
        <dbReference type="ChEBI" id="CHEBI:189552"/>
    </ligand>
</feature>
<feature type="binding site" evidence="1">
    <location>
        <position position="189"/>
    </location>
    <ligand>
        <name>[CaMn4O5] cluster</name>
        <dbReference type="ChEBI" id="CHEBI:189552"/>
    </ligand>
</feature>
<feature type="binding site" description="axial binding residue" evidence="1">
    <location>
        <position position="198"/>
    </location>
    <ligand>
        <name>chlorophyll a</name>
        <dbReference type="ChEBI" id="CHEBI:58416"/>
        <label>PD1</label>
    </ligand>
    <ligandPart>
        <name>Mg</name>
        <dbReference type="ChEBI" id="CHEBI:25107"/>
    </ligandPart>
</feature>
<feature type="binding site" evidence="1">
    <location>
        <position position="215"/>
    </location>
    <ligand>
        <name>a quinone</name>
        <dbReference type="ChEBI" id="CHEBI:132124"/>
        <label>B</label>
    </ligand>
</feature>
<feature type="binding site" evidence="1">
    <location>
        <position position="215"/>
    </location>
    <ligand>
        <name>Fe cation</name>
        <dbReference type="ChEBI" id="CHEBI:24875"/>
        <note>ligand shared with heterodimeric partner</note>
    </ligand>
</feature>
<feature type="binding site" evidence="1">
    <location>
        <begin position="264"/>
        <end position="265"/>
    </location>
    <ligand>
        <name>a quinone</name>
        <dbReference type="ChEBI" id="CHEBI:132124"/>
        <label>B</label>
    </ligand>
</feature>
<feature type="binding site" evidence="1">
    <location>
        <position position="272"/>
    </location>
    <ligand>
        <name>Fe cation</name>
        <dbReference type="ChEBI" id="CHEBI:24875"/>
        <note>ligand shared with heterodimeric partner</note>
    </ligand>
</feature>
<feature type="binding site" evidence="1">
    <location>
        <position position="332"/>
    </location>
    <ligand>
        <name>[CaMn4O5] cluster</name>
        <dbReference type="ChEBI" id="CHEBI:189552"/>
    </ligand>
</feature>
<feature type="binding site" evidence="1">
    <location>
        <position position="333"/>
    </location>
    <ligand>
        <name>[CaMn4O5] cluster</name>
        <dbReference type="ChEBI" id="CHEBI:189552"/>
    </ligand>
</feature>
<feature type="binding site" evidence="1">
    <location>
        <position position="342"/>
    </location>
    <ligand>
        <name>[CaMn4O5] cluster</name>
        <dbReference type="ChEBI" id="CHEBI:189552"/>
    </ligand>
</feature>
<feature type="binding site" evidence="1">
    <location>
        <position position="344"/>
    </location>
    <ligand>
        <name>[CaMn4O5] cluster</name>
        <dbReference type="ChEBI" id="CHEBI:189552"/>
    </ligand>
</feature>
<feature type="site" description="Tyrosine radical intermediate" evidence="1">
    <location>
        <position position="161"/>
    </location>
</feature>
<feature type="site" description="Stabilizes free radical intermediate" evidence="1">
    <location>
        <position position="190"/>
    </location>
</feature>
<feature type="site" description="Cleavage; by CTPA" evidence="1">
    <location>
        <begin position="344"/>
        <end position="345"/>
    </location>
</feature>
<feature type="modified residue" description="N-acetylthreonine" evidence="1">
    <location>
        <position position="2"/>
    </location>
</feature>
<feature type="modified residue" description="Phosphothreonine" evidence="1">
    <location>
        <position position="2"/>
    </location>
</feature>
<comment type="function">
    <text evidence="1">Photosystem II (PSII) is a light-driven water:plastoquinone oxidoreductase that uses light energy to abstract electrons from H(2)O, generating O(2) and a proton gradient subsequently used for ATP formation. It consists of a core antenna complex that captures photons, and an electron transfer chain that converts photonic excitation into a charge separation. The D1/D2 (PsbA/PsbD) reaction center heterodimer binds P680, the primary electron donor of PSII as well as several subsequent electron acceptors.</text>
</comment>
<comment type="catalytic activity">
    <reaction evidence="1">
        <text>2 a plastoquinone + 4 hnu + 2 H2O = 2 a plastoquinol + O2</text>
        <dbReference type="Rhea" id="RHEA:36359"/>
        <dbReference type="Rhea" id="RHEA-COMP:9561"/>
        <dbReference type="Rhea" id="RHEA-COMP:9562"/>
        <dbReference type="ChEBI" id="CHEBI:15377"/>
        <dbReference type="ChEBI" id="CHEBI:15379"/>
        <dbReference type="ChEBI" id="CHEBI:17757"/>
        <dbReference type="ChEBI" id="CHEBI:30212"/>
        <dbReference type="ChEBI" id="CHEBI:62192"/>
        <dbReference type="EC" id="1.10.3.9"/>
    </reaction>
</comment>
<comment type="cofactor">
    <text evidence="1">The D1/D2 heterodimer binds P680, chlorophylls that are the primary electron donor of PSII, and subsequent electron acceptors. It shares a non-heme iron and each subunit binds pheophytin, quinone, additional chlorophylls, carotenoids and lipids. D1 provides most of the ligands for the Mn4-Ca-O5 cluster of the oxygen-evolving complex (OEC). There is also a Cl(-1) ion associated with D1 and D2, which is required for oxygen evolution. The PSII complex binds additional chlorophylls, carotenoids and specific lipids.</text>
</comment>
<comment type="subunit">
    <text evidence="1">PSII is composed of 1 copy each of membrane proteins PsbA, PsbB, PsbC, PsbD, PsbE, PsbF, PsbH, PsbI, PsbJ, PsbK, PsbL, PsbM, PsbT, PsbX, PsbY, PsbZ, Psb30/Ycf12, at least 3 peripheral proteins of the oxygen-evolving complex and a large number of cofactors. It forms dimeric complexes.</text>
</comment>
<comment type="subcellular location">
    <subcellularLocation>
        <location evidence="1">Plastid</location>
        <location evidence="1">Chloroplast thylakoid membrane</location>
        <topology evidence="1">Multi-pass membrane protein</topology>
    </subcellularLocation>
</comment>
<comment type="PTM">
    <text evidence="1">Tyr-161 forms a radical intermediate that is referred to as redox-active TyrZ, YZ or Y-Z.</text>
</comment>
<comment type="PTM">
    <text evidence="1">C-terminally processed by CTPA; processing is essential to allow assembly of the oxygen-evolving complex and thus photosynthetic growth.</text>
</comment>
<comment type="miscellaneous">
    <text evidence="1">2 of the reaction center chlorophylls (ChlD1 and ChlD2) are entirely coordinated by water.</text>
</comment>
<comment type="miscellaneous">
    <text evidence="1">Herbicides such as atrazine, BNT, diuron or ioxynil bind in the Q(B) binding site and block subsequent electron transfer.</text>
</comment>
<comment type="similarity">
    <text evidence="1">Belongs to the reaction center PufL/M/PsbA/D family.</text>
</comment>